<dbReference type="EC" id="1.2.1.71" evidence="1"/>
<dbReference type="EMBL" id="CP000248">
    <property type="protein sequence ID" value="ABD25384.1"/>
    <property type="molecule type" value="Genomic_DNA"/>
</dbReference>
<dbReference type="RefSeq" id="WP_011444598.1">
    <property type="nucleotide sequence ID" value="NC_007794.1"/>
</dbReference>
<dbReference type="SMR" id="Q2G9T9"/>
<dbReference type="STRING" id="279238.Saro_0939"/>
<dbReference type="KEGG" id="nar:Saro_0939"/>
<dbReference type="eggNOG" id="COG1012">
    <property type="taxonomic scope" value="Bacteria"/>
</dbReference>
<dbReference type="HOGENOM" id="CLU_005391_1_0_5"/>
<dbReference type="UniPathway" id="UPA00185">
    <property type="reaction ID" value="UER00282"/>
</dbReference>
<dbReference type="Proteomes" id="UP000009134">
    <property type="component" value="Chromosome"/>
</dbReference>
<dbReference type="GO" id="GO:0043824">
    <property type="term" value="F:succinylglutamate-semialdehyde dehydrogenase activity"/>
    <property type="evidence" value="ECO:0007669"/>
    <property type="project" value="UniProtKB-EC"/>
</dbReference>
<dbReference type="GO" id="GO:0019544">
    <property type="term" value="P:arginine catabolic process to glutamate"/>
    <property type="evidence" value="ECO:0007669"/>
    <property type="project" value="UniProtKB-UniRule"/>
</dbReference>
<dbReference type="GO" id="GO:0019545">
    <property type="term" value="P:arginine catabolic process to succinate"/>
    <property type="evidence" value="ECO:0007669"/>
    <property type="project" value="UniProtKB-UniRule"/>
</dbReference>
<dbReference type="CDD" id="cd07095">
    <property type="entry name" value="ALDH_SGSD_AstD"/>
    <property type="match status" value="1"/>
</dbReference>
<dbReference type="FunFam" id="3.40.605.10:FF:000010">
    <property type="entry name" value="N-succinylglutamate 5-semialdehyde dehydrogenase"/>
    <property type="match status" value="1"/>
</dbReference>
<dbReference type="Gene3D" id="3.40.605.10">
    <property type="entry name" value="Aldehyde Dehydrogenase, Chain A, domain 1"/>
    <property type="match status" value="1"/>
</dbReference>
<dbReference type="Gene3D" id="3.40.309.10">
    <property type="entry name" value="Aldehyde Dehydrogenase, Chain A, domain 2"/>
    <property type="match status" value="1"/>
</dbReference>
<dbReference type="HAMAP" id="MF_01174">
    <property type="entry name" value="Aldedh_AstD"/>
    <property type="match status" value="1"/>
</dbReference>
<dbReference type="InterPro" id="IPR016161">
    <property type="entry name" value="Ald_DH/histidinol_DH"/>
</dbReference>
<dbReference type="InterPro" id="IPR016163">
    <property type="entry name" value="Ald_DH_C"/>
</dbReference>
<dbReference type="InterPro" id="IPR016160">
    <property type="entry name" value="Ald_DH_CS_CYS"/>
</dbReference>
<dbReference type="InterPro" id="IPR029510">
    <property type="entry name" value="Ald_DH_CS_GLU"/>
</dbReference>
<dbReference type="InterPro" id="IPR016162">
    <property type="entry name" value="Ald_DH_N"/>
</dbReference>
<dbReference type="InterPro" id="IPR015590">
    <property type="entry name" value="Aldehyde_DH_dom"/>
</dbReference>
<dbReference type="InterPro" id="IPR017649">
    <property type="entry name" value="SuccinylGlu_semiald_DH_AstD"/>
</dbReference>
<dbReference type="NCBIfam" id="TIGR03240">
    <property type="entry name" value="arg_catab_astD"/>
    <property type="match status" value="1"/>
</dbReference>
<dbReference type="NCBIfam" id="NF006992">
    <property type="entry name" value="PRK09457.1"/>
    <property type="match status" value="1"/>
</dbReference>
<dbReference type="PANTHER" id="PTHR11699">
    <property type="entry name" value="ALDEHYDE DEHYDROGENASE-RELATED"/>
    <property type="match status" value="1"/>
</dbReference>
<dbReference type="Pfam" id="PF00171">
    <property type="entry name" value="Aldedh"/>
    <property type="match status" value="1"/>
</dbReference>
<dbReference type="SUPFAM" id="SSF53720">
    <property type="entry name" value="ALDH-like"/>
    <property type="match status" value="1"/>
</dbReference>
<dbReference type="PROSITE" id="PS00070">
    <property type="entry name" value="ALDEHYDE_DEHYDR_CYS"/>
    <property type="match status" value="1"/>
</dbReference>
<dbReference type="PROSITE" id="PS00687">
    <property type="entry name" value="ALDEHYDE_DEHYDR_GLU"/>
    <property type="match status" value="1"/>
</dbReference>
<sequence>MARAEIVSHEPATGAEVWRGKVGDVEEVVARARRAWPAWAAQPLATRIELVRRFANEVRKDADNLATMISRETGKPLWEARTEVDSVVNKVEISIRAYADRTSQRKLDSALQGTAALRHKPHGVLAVLGPYNFPAHLPNGHIVPALIAGNAVVFKPSEKTPATGEMLAQCFHRAGIPAAVVQVLIGGPEEGQALVAHDGIDGVLFTGSAHAGIAINRKLASNPGKIVALEMGGNNPIVVWDTPKIEDAATLIVQSAFTSAGQRCTAARRLIIKASMFDEVIDHVKRLADRIIVGAPFDDPAPFMGPVIDNRTADGLTESFVYLLSSGGRPIKHMVRLQEDRPFLSPAIIDVTAVADRPDVELFGPLLQVVRVDDFDEAIAEANNTRFGLSASLIGGDPQDYNRFWANIRAGVVNWNRPTNGASSAAPFGGVGLSGNHRPSAYYAADYCAYPVASTEVDQPRASIGVGLRSD</sequence>
<protein>
    <recommendedName>
        <fullName evidence="1">N-succinylglutamate 5-semialdehyde dehydrogenase</fullName>
        <ecNumber evidence="1">1.2.1.71</ecNumber>
    </recommendedName>
    <alternativeName>
        <fullName evidence="1">Succinylglutamic semialdehyde dehydrogenase</fullName>
        <shortName evidence="1">SGSD</shortName>
    </alternativeName>
</protein>
<accession>Q2G9T9</accession>
<feature type="chain" id="PRO_0000262408" description="N-succinylglutamate 5-semialdehyde dehydrogenase">
    <location>
        <begin position="1"/>
        <end position="471"/>
    </location>
</feature>
<feature type="active site" evidence="1">
    <location>
        <position position="230"/>
    </location>
</feature>
<feature type="active site" evidence="1">
    <location>
        <position position="264"/>
    </location>
</feature>
<feature type="binding site" evidence="1">
    <location>
        <begin position="207"/>
        <end position="212"/>
    </location>
    <ligand>
        <name>NAD(+)</name>
        <dbReference type="ChEBI" id="CHEBI:57540"/>
    </ligand>
</feature>
<comment type="function">
    <text evidence="1">Catalyzes the NAD-dependent reduction of succinylglutamate semialdehyde into succinylglutamate.</text>
</comment>
<comment type="catalytic activity">
    <reaction evidence="1">
        <text>N-succinyl-L-glutamate 5-semialdehyde + NAD(+) + H2O = N-succinyl-L-glutamate + NADH + 2 H(+)</text>
        <dbReference type="Rhea" id="RHEA:10812"/>
        <dbReference type="ChEBI" id="CHEBI:15377"/>
        <dbReference type="ChEBI" id="CHEBI:15378"/>
        <dbReference type="ChEBI" id="CHEBI:57540"/>
        <dbReference type="ChEBI" id="CHEBI:57945"/>
        <dbReference type="ChEBI" id="CHEBI:58520"/>
        <dbReference type="ChEBI" id="CHEBI:58763"/>
        <dbReference type="EC" id="1.2.1.71"/>
    </reaction>
</comment>
<comment type="pathway">
    <text evidence="1">Amino-acid degradation; L-arginine degradation via AST pathway; L-glutamate and succinate from L-arginine: step 4/5.</text>
</comment>
<comment type="similarity">
    <text evidence="1">Belongs to the aldehyde dehydrogenase family. AstD subfamily.</text>
</comment>
<evidence type="ECO:0000255" key="1">
    <source>
        <dbReference type="HAMAP-Rule" id="MF_01174"/>
    </source>
</evidence>
<keyword id="KW-0056">Arginine metabolism</keyword>
<keyword id="KW-0520">NAD</keyword>
<keyword id="KW-0560">Oxidoreductase</keyword>
<keyword id="KW-1185">Reference proteome</keyword>
<organism>
    <name type="scientific">Novosphingobium aromaticivorans (strain ATCC 700278 / DSM 12444 / CCUG 56034 / CIP 105152 / NBRC 16084 / F199)</name>
    <dbReference type="NCBI Taxonomy" id="279238"/>
    <lineage>
        <taxon>Bacteria</taxon>
        <taxon>Pseudomonadati</taxon>
        <taxon>Pseudomonadota</taxon>
        <taxon>Alphaproteobacteria</taxon>
        <taxon>Sphingomonadales</taxon>
        <taxon>Sphingomonadaceae</taxon>
        <taxon>Novosphingobium</taxon>
    </lineage>
</organism>
<reference key="1">
    <citation type="submission" date="2006-01" db="EMBL/GenBank/DDBJ databases">
        <title>Complete sequence of Novosphingobium aromaticivorans DSM 12444.</title>
        <authorList>
            <consortium name="US DOE Joint Genome Institute"/>
            <person name="Copeland A."/>
            <person name="Lucas S."/>
            <person name="Lapidus A."/>
            <person name="Barry K."/>
            <person name="Detter J.C."/>
            <person name="Glavina T."/>
            <person name="Hammon N."/>
            <person name="Israni S."/>
            <person name="Pitluck S."/>
            <person name="Chain P."/>
            <person name="Malfatti S."/>
            <person name="Shin M."/>
            <person name="Vergez L."/>
            <person name="Schmutz J."/>
            <person name="Larimer F."/>
            <person name="Land M."/>
            <person name="Kyrpides N."/>
            <person name="Ivanova N."/>
            <person name="Fredrickson J."/>
            <person name="Balkwill D."/>
            <person name="Romine M.F."/>
            <person name="Richardson P."/>
        </authorList>
    </citation>
    <scope>NUCLEOTIDE SEQUENCE [LARGE SCALE GENOMIC DNA]</scope>
    <source>
        <strain>ATCC 700278 / DSM 12444 / CCUG 56034 / CIP 105152 / NBRC 16084 / F199</strain>
    </source>
</reference>
<proteinExistence type="inferred from homology"/>
<gene>
    <name evidence="1" type="primary">astD</name>
    <name type="ordered locus">Saro_0939</name>
</gene>
<name>ASTD_NOVAD</name>